<comment type="function">
    <text>Protein S12 is involved in the translation initiation step.</text>
</comment>
<comment type="subcellular location">
    <subcellularLocation>
        <location>Mitochondrion</location>
    </subcellularLocation>
</comment>
<comment type="similarity">
    <text evidence="2">Belongs to the universal ribosomal protein uS12 family.</text>
</comment>
<feature type="chain" id="PRO_0000146445" description="Small ribosomal subunit protein uS12m">
    <location>
        <begin position="1"/>
        <end position="125"/>
    </location>
</feature>
<feature type="region of interest" description="Disordered" evidence="1">
    <location>
        <begin position="1"/>
        <end position="50"/>
    </location>
</feature>
<feature type="compositionally biased region" description="Basic and acidic residues" evidence="1">
    <location>
        <begin position="10"/>
        <end position="23"/>
    </location>
</feature>
<proteinExistence type="inferred from homology"/>
<dbReference type="EMBL" id="U30458">
    <property type="protein sequence ID" value="AAB82732.1"/>
    <property type="molecule type" value="Genomic_DNA"/>
</dbReference>
<dbReference type="SMR" id="P68535"/>
<dbReference type="GO" id="GO:0005739">
    <property type="term" value="C:mitochondrion"/>
    <property type="evidence" value="ECO:0007669"/>
    <property type="project" value="UniProtKB-SubCell"/>
</dbReference>
<dbReference type="GO" id="GO:0015935">
    <property type="term" value="C:small ribosomal subunit"/>
    <property type="evidence" value="ECO:0007669"/>
    <property type="project" value="InterPro"/>
</dbReference>
<dbReference type="GO" id="GO:0003735">
    <property type="term" value="F:structural constituent of ribosome"/>
    <property type="evidence" value="ECO:0007669"/>
    <property type="project" value="InterPro"/>
</dbReference>
<dbReference type="GO" id="GO:0006412">
    <property type="term" value="P:translation"/>
    <property type="evidence" value="ECO:0007669"/>
    <property type="project" value="InterPro"/>
</dbReference>
<dbReference type="CDD" id="cd03368">
    <property type="entry name" value="Ribosomal_S12"/>
    <property type="match status" value="1"/>
</dbReference>
<dbReference type="FunFam" id="2.40.50.140:FF:000099">
    <property type="entry name" value="Ribosomal protein S12, mitochondrial"/>
    <property type="match status" value="1"/>
</dbReference>
<dbReference type="Gene3D" id="2.40.50.140">
    <property type="entry name" value="Nucleic acid-binding proteins"/>
    <property type="match status" value="1"/>
</dbReference>
<dbReference type="HAMAP" id="MF_00403_B">
    <property type="entry name" value="Ribosomal_uS12_B"/>
    <property type="match status" value="1"/>
</dbReference>
<dbReference type="InterPro" id="IPR012340">
    <property type="entry name" value="NA-bd_OB-fold"/>
</dbReference>
<dbReference type="InterPro" id="IPR006032">
    <property type="entry name" value="Ribosomal_uS12"/>
</dbReference>
<dbReference type="InterPro" id="IPR005679">
    <property type="entry name" value="Ribosomal_uS12_bac"/>
</dbReference>
<dbReference type="NCBIfam" id="TIGR00981">
    <property type="entry name" value="rpsL_bact"/>
    <property type="match status" value="1"/>
</dbReference>
<dbReference type="PANTHER" id="PTHR11652">
    <property type="entry name" value="30S RIBOSOMAL PROTEIN S12 FAMILY MEMBER"/>
    <property type="match status" value="1"/>
</dbReference>
<dbReference type="Pfam" id="PF00164">
    <property type="entry name" value="Ribosom_S12_S23"/>
    <property type="match status" value="1"/>
</dbReference>
<dbReference type="PIRSF" id="PIRSF002133">
    <property type="entry name" value="Ribosomal_S12/S23"/>
    <property type="match status" value="1"/>
</dbReference>
<dbReference type="PRINTS" id="PR01034">
    <property type="entry name" value="RIBOSOMALS12"/>
</dbReference>
<dbReference type="SUPFAM" id="SSF50249">
    <property type="entry name" value="Nucleic acid-binding proteins"/>
    <property type="match status" value="1"/>
</dbReference>
<dbReference type="PROSITE" id="PS00055">
    <property type="entry name" value="RIBOSOMAL_S12"/>
    <property type="match status" value="1"/>
</dbReference>
<name>RT12_PETHY</name>
<geneLocation type="mitochondrion"/>
<protein>
    <recommendedName>
        <fullName evidence="2">Small ribosomal subunit protein uS12m</fullName>
    </recommendedName>
    <alternativeName>
        <fullName>Ribosomal protein S12, mitochondrial</fullName>
    </alternativeName>
</protein>
<organism>
    <name type="scientific">Petunia hybrida</name>
    <name type="common">Petunia</name>
    <dbReference type="NCBI Taxonomy" id="4102"/>
    <lineage>
        <taxon>Eukaryota</taxon>
        <taxon>Viridiplantae</taxon>
        <taxon>Streptophyta</taxon>
        <taxon>Embryophyta</taxon>
        <taxon>Tracheophyta</taxon>
        <taxon>Spermatophyta</taxon>
        <taxon>Magnoliopsida</taxon>
        <taxon>eudicotyledons</taxon>
        <taxon>Gunneridae</taxon>
        <taxon>Pentapetalae</taxon>
        <taxon>asterids</taxon>
        <taxon>lamiids</taxon>
        <taxon>Solanales</taxon>
        <taxon>Solanaceae</taxon>
        <taxon>Petunioideae</taxon>
        <taxon>Petunia</taxon>
    </lineage>
</organism>
<accession>P68535</accession>
<accession>P49195</accession>
<reference key="1">
    <citation type="submission" date="1995-06" db="EMBL/GenBank/DDBJ databases">
        <authorList>
            <person name="Wilson R.K."/>
            <person name="Hanson M.R."/>
        </authorList>
    </citation>
    <scope>NUCLEOTIDE SEQUENCE [GENOMIC DNA]</scope>
    <source>
        <strain>Line 3704</strain>
    </source>
</reference>
<sequence length="125" mass="14152">MPSLNQLIRHGREEKRRTDRTRALDQCPQKQGVCPRVSTRTPKKPNSAPRKIAKVRLSNRHDIFAHIPGEGHNLQEHSMVLIRGGRVKDSPGVKSHCIRGVKDLLGIPDRRRGRSKYGAEKPKSI</sequence>
<keyword id="KW-0496">Mitochondrion</keyword>
<keyword id="KW-0687">Ribonucleoprotein</keyword>
<keyword id="KW-0689">Ribosomal protein</keyword>
<gene>
    <name type="primary">RPS12</name>
</gene>
<evidence type="ECO:0000256" key="1">
    <source>
        <dbReference type="SAM" id="MobiDB-lite"/>
    </source>
</evidence>
<evidence type="ECO:0000305" key="2"/>